<organism>
    <name type="scientific">Protochlamydia amoebophila (strain UWE25)</name>
    <dbReference type="NCBI Taxonomy" id="264201"/>
    <lineage>
        <taxon>Bacteria</taxon>
        <taxon>Pseudomonadati</taxon>
        <taxon>Chlamydiota</taxon>
        <taxon>Chlamydiia</taxon>
        <taxon>Parachlamydiales</taxon>
        <taxon>Parachlamydiaceae</taxon>
        <taxon>Candidatus Protochlamydia</taxon>
    </lineage>
</organism>
<evidence type="ECO:0000255" key="1">
    <source>
        <dbReference type="HAMAP-Rule" id="MF_00111"/>
    </source>
</evidence>
<sequence length="465" mass="50688">MDVLKITGGIPLKGQVKAAGAKNAMTKLLVASLLSDKKCTFYNVPNIGDVEVTVSLCQEIGMEVRWDRAAGIMEVITKELKTSYIPQRFSGSNRIPILMIGALLGRTDQDIIVPTAGGCPIGQRPVDFHIQALEQLGAVIEYRGMKREGAYFAHAHNGLKGTLITLPYPSVGATENTILAGITARGVTVIKNAAIEPEIVELILFLQKLGAIITIDVDRTIRIQGTRRFYEVEHTVIPDRIEAASWGMAAISSKGKVFVEGAQHLNMITFLNKLREVGGGFDVRSNGIEFFYDGPLQGGLHLETDVHPGFMTDWQQPFVVLLTQSSGTSVVHETVYENRFGYTDTLKEMGADITPFRQCLGGKSCRFASQSFSHSAIIKGATPLVGKEIRIPDLRAGFAYIMAALIANDTSTISGLPFIQRGYENFIGKLADLGANVSLVEEEKNVKEMPENSSKLPLFAELQVN</sequence>
<feature type="chain" id="PRO_0000231233" description="UDP-N-acetylglucosamine 1-carboxyvinyltransferase">
    <location>
        <begin position="1"/>
        <end position="465"/>
    </location>
</feature>
<feature type="active site" description="Proton donor" evidence="1">
    <location>
        <position position="119"/>
    </location>
</feature>
<feature type="binding site" evidence="1">
    <location>
        <begin position="22"/>
        <end position="23"/>
    </location>
    <ligand>
        <name>phosphoenolpyruvate</name>
        <dbReference type="ChEBI" id="CHEBI:58702"/>
    </ligand>
</feature>
<feature type="binding site" evidence="1">
    <location>
        <position position="94"/>
    </location>
    <ligand>
        <name>UDP-N-acetyl-alpha-D-glucosamine</name>
        <dbReference type="ChEBI" id="CHEBI:57705"/>
    </ligand>
</feature>
<feature type="binding site" evidence="1">
    <location>
        <position position="313"/>
    </location>
    <ligand>
        <name>UDP-N-acetyl-alpha-D-glucosamine</name>
        <dbReference type="ChEBI" id="CHEBI:57705"/>
    </ligand>
</feature>
<feature type="binding site" evidence="1">
    <location>
        <position position="335"/>
    </location>
    <ligand>
        <name>UDP-N-acetyl-alpha-D-glucosamine</name>
        <dbReference type="ChEBI" id="CHEBI:57705"/>
    </ligand>
</feature>
<feature type="modified residue" description="2-(S-cysteinyl)pyruvic acid O-phosphothioketal" evidence="1">
    <location>
        <position position="119"/>
    </location>
</feature>
<protein>
    <recommendedName>
        <fullName evidence="1">UDP-N-acetylglucosamine 1-carboxyvinyltransferase</fullName>
        <ecNumber evidence="1">2.5.1.7</ecNumber>
    </recommendedName>
    <alternativeName>
        <fullName evidence="1">Enoylpyruvate transferase</fullName>
    </alternativeName>
    <alternativeName>
        <fullName evidence="1">UDP-N-acetylglucosamine enolpyruvyl transferase</fullName>
        <shortName evidence="1">EPT</shortName>
    </alternativeName>
</protein>
<gene>
    <name evidence="1" type="primary">murA</name>
    <name type="synonym">murZ</name>
    <name type="ordered locus">pc0229</name>
</gene>
<dbReference type="EC" id="2.5.1.7" evidence="1"/>
<dbReference type="EMBL" id="BX908798">
    <property type="protein sequence ID" value="CAF22953.1"/>
    <property type="molecule type" value="Genomic_DNA"/>
</dbReference>
<dbReference type="RefSeq" id="WP_011174779.1">
    <property type="nucleotide sequence ID" value="NC_005861.2"/>
</dbReference>
<dbReference type="SMR" id="Q6MEP6"/>
<dbReference type="STRING" id="264201.pc0229"/>
<dbReference type="KEGG" id="pcu:PC_RS01110"/>
<dbReference type="eggNOG" id="COG0766">
    <property type="taxonomic scope" value="Bacteria"/>
</dbReference>
<dbReference type="HOGENOM" id="CLU_027387_0_0_0"/>
<dbReference type="OrthoDB" id="9803760at2"/>
<dbReference type="UniPathway" id="UPA00219"/>
<dbReference type="Proteomes" id="UP000000529">
    <property type="component" value="Chromosome"/>
</dbReference>
<dbReference type="GO" id="GO:0005737">
    <property type="term" value="C:cytoplasm"/>
    <property type="evidence" value="ECO:0007669"/>
    <property type="project" value="UniProtKB-SubCell"/>
</dbReference>
<dbReference type="GO" id="GO:0008760">
    <property type="term" value="F:UDP-N-acetylglucosamine 1-carboxyvinyltransferase activity"/>
    <property type="evidence" value="ECO:0007669"/>
    <property type="project" value="UniProtKB-UniRule"/>
</dbReference>
<dbReference type="GO" id="GO:0051301">
    <property type="term" value="P:cell division"/>
    <property type="evidence" value="ECO:0007669"/>
    <property type="project" value="UniProtKB-KW"/>
</dbReference>
<dbReference type="GO" id="GO:0071555">
    <property type="term" value="P:cell wall organization"/>
    <property type="evidence" value="ECO:0007669"/>
    <property type="project" value="UniProtKB-KW"/>
</dbReference>
<dbReference type="GO" id="GO:0009252">
    <property type="term" value="P:peptidoglycan biosynthetic process"/>
    <property type="evidence" value="ECO:0007669"/>
    <property type="project" value="UniProtKB-UniRule"/>
</dbReference>
<dbReference type="GO" id="GO:0008360">
    <property type="term" value="P:regulation of cell shape"/>
    <property type="evidence" value="ECO:0007669"/>
    <property type="project" value="UniProtKB-KW"/>
</dbReference>
<dbReference type="GO" id="GO:0019277">
    <property type="term" value="P:UDP-N-acetylgalactosamine biosynthetic process"/>
    <property type="evidence" value="ECO:0007669"/>
    <property type="project" value="InterPro"/>
</dbReference>
<dbReference type="CDD" id="cd01555">
    <property type="entry name" value="UdpNAET"/>
    <property type="match status" value="1"/>
</dbReference>
<dbReference type="Gene3D" id="3.65.10.10">
    <property type="entry name" value="Enolpyruvate transferase domain"/>
    <property type="match status" value="2"/>
</dbReference>
<dbReference type="HAMAP" id="MF_00111">
    <property type="entry name" value="MurA"/>
    <property type="match status" value="1"/>
</dbReference>
<dbReference type="InterPro" id="IPR001986">
    <property type="entry name" value="Enolpyruvate_Tfrase_dom"/>
</dbReference>
<dbReference type="InterPro" id="IPR036968">
    <property type="entry name" value="Enolpyruvate_Tfrase_sf"/>
</dbReference>
<dbReference type="InterPro" id="IPR050068">
    <property type="entry name" value="MurA_subfamily"/>
</dbReference>
<dbReference type="InterPro" id="IPR013792">
    <property type="entry name" value="RNA3'P_cycl/enolpyr_Trfase_a/b"/>
</dbReference>
<dbReference type="InterPro" id="IPR005750">
    <property type="entry name" value="UDP_GlcNAc_COvinyl_MurA"/>
</dbReference>
<dbReference type="NCBIfam" id="TIGR01072">
    <property type="entry name" value="murA"/>
    <property type="match status" value="1"/>
</dbReference>
<dbReference type="NCBIfam" id="NF006873">
    <property type="entry name" value="PRK09369.1"/>
    <property type="match status" value="1"/>
</dbReference>
<dbReference type="PANTHER" id="PTHR43783">
    <property type="entry name" value="UDP-N-ACETYLGLUCOSAMINE 1-CARBOXYVINYLTRANSFERASE"/>
    <property type="match status" value="1"/>
</dbReference>
<dbReference type="PANTHER" id="PTHR43783:SF1">
    <property type="entry name" value="UDP-N-ACETYLGLUCOSAMINE 1-CARBOXYVINYLTRANSFERASE"/>
    <property type="match status" value="1"/>
</dbReference>
<dbReference type="Pfam" id="PF00275">
    <property type="entry name" value="EPSP_synthase"/>
    <property type="match status" value="1"/>
</dbReference>
<dbReference type="SUPFAM" id="SSF55205">
    <property type="entry name" value="EPT/RTPC-like"/>
    <property type="match status" value="1"/>
</dbReference>
<reference key="1">
    <citation type="journal article" date="2004" name="Science">
        <title>Illuminating the evolutionary history of chlamydiae.</title>
        <authorList>
            <person name="Horn M."/>
            <person name="Collingro A."/>
            <person name="Schmitz-Esser S."/>
            <person name="Beier C.L."/>
            <person name="Purkhold U."/>
            <person name="Fartmann B."/>
            <person name="Brandt P."/>
            <person name="Nyakatura G.J."/>
            <person name="Droege M."/>
            <person name="Frishman D."/>
            <person name="Rattei T."/>
            <person name="Mewes H.-W."/>
            <person name="Wagner M."/>
        </authorList>
    </citation>
    <scope>NUCLEOTIDE SEQUENCE [LARGE SCALE GENOMIC DNA]</scope>
    <source>
        <strain>UWE25</strain>
    </source>
</reference>
<name>MURA_PARUW</name>
<comment type="function">
    <text evidence="1">Cell wall formation. Adds enolpyruvyl to UDP-N-acetylglucosamine.</text>
</comment>
<comment type="catalytic activity">
    <reaction evidence="1">
        <text>phosphoenolpyruvate + UDP-N-acetyl-alpha-D-glucosamine = UDP-N-acetyl-3-O-(1-carboxyvinyl)-alpha-D-glucosamine + phosphate</text>
        <dbReference type="Rhea" id="RHEA:18681"/>
        <dbReference type="ChEBI" id="CHEBI:43474"/>
        <dbReference type="ChEBI" id="CHEBI:57705"/>
        <dbReference type="ChEBI" id="CHEBI:58702"/>
        <dbReference type="ChEBI" id="CHEBI:68483"/>
        <dbReference type="EC" id="2.5.1.7"/>
    </reaction>
</comment>
<comment type="pathway">
    <text evidence="1">Cell wall biogenesis; peptidoglycan biosynthesis.</text>
</comment>
<comment type="subcellular location">
    <subcellularLocation>
        <location evidence="1">Cytoplasm</location>
    </subcellularLocation>
</comment>
<comment type="similarity">
    <text evidence="1">Belongs to the EPSP synthase family. MurA subfamily.</text>
</comment>
<keyword id="KW-0131">Cell cycle</keyword>
<keyword id="KW-0132">Cell division</keyword>
<keyword id="KW-0133">Cell shape</keyword>
<keyword id="KW-0961">Cell wall biogenesis/degradation</keyword>
<keyword id="KW-0963">Cytoplasm</keyword>
<keyword id="KW-0573">Peptidoglycan synthesis</keyword>
<keyword id="KW-0670">Pyruvate</keyword>
<keyword id="KW-1185">Reference proteome</keyword>
<keyword id="KW-0808">Transferase</keyword>
<proteinExistence type="inferred from homology"/>
<accession>Q6MEP6</accession>